<comment type="function">
    <text>This is one of 5 proteins that mediate the attachment of the 5S rRNA onto the large ribosomal subunit, where it forms part of the central protuberance and stabilizes the orientation of adjacent RNA domains.</text>
</comment>
<comment type="subunit">
    <text evidence="1 2">Part of the 50S ribosomal subunit. Interacts with proteins L5 and L21e, and attaches the 5S rRNA to the 23S rRNA. Has been cross-linked to L21e.</text>
</comment>
<comment type="similarity">
    <text evidence="4">Belongs to the universal ribosomal protein uL18 family.</text>
</comment>
<gene>
    <name type="primary">rpl18</name>
    <name type="ordered locus">rrnAC1593</name>
</gene>
<evidence type="ECO:0000269" key="1">
    <source>
    </source>
</evidence>
<evidence type="ECO:0000269" key="2">
    <source>
    </source>
</evidence>
<evidence type="ECO:0000269" key="3">
    <source>
    </source>
</evidence>
<evidence type="ECO:0000305" key="4"/>
<evidence type="ECO:0007829" key="5">
    <source>
        <dbReference type="PDB" id="1VQ8"/>
    </source>
</evidence>
<evidence type="ECO:0007829" key="6">
    <source>
        <dbReference type="PDB" id="3CC2"/>
    </source>
</evidence>
<evidence type="ECO:0007829" key="7">
    <source>
        <dbReference type="PDB" id="3OW2"/>
    </source>
</evidence>
<feature type="initiator methionine" description="Removed" evidence="3">
    <location>
        <position position="1"/>
    </location>
</feature>
<feature type="chain" id="PRO_0000131400" description="Large ribosomal subunit protein uL18">
    <location>
        <begin position="2"/>
        <end position="187"/>
    </location>
</feature>
<feature type="sequence conflict" description="In Ref. 3; AA sequence." evidence="4" ref="3">
    <original>R</original>
    <variation>A</variation>
    <location>
        <position position="18"/>
    </location>
</feature>
<feature type="strand" evidence="7">
    <location>
        <begin position="4"/>
        <end position="6"/>
    </location>
</feature>
<feature type="helix" evidence="5">
    <location>
        <begin position="12"/>
        <end position="15"/>
    </location>
</feature>
<feature type="helix" evidence="5">
    <location>
        <begin position="21"/>
        <end position="28"/>
    </location>
</feature>
<feature type="strand" evidence="5">
    <location>
        <begin position="34"/>
        <end position="39"/>
    </location>
</feature>
<feature type="strand" evidence="5">
    <location>
        <begin position="44"/>
        <end position="50"/>
    </location>
</feature>
<feature type="strand" evidence="6">
    <location>
        <begin position="53"/>
        <end position="55"/>
    </location>
</feature>
<feature type="strand" evidence="5">
    <location>
        <begin position="57"/>
        <end position="64"/>
    </location>
</feature>
<feature type="helix" evidence="5">
    <location>
        <begin position="65"/>
        <end position="70"/>
    </location>
</feature>
<feature type="strand" evidence="5">
    <location>
        <begin position="76"/>
        <end position="78"/>
    </location>
</feature>
<feature type="helix" evidence="5">
    <location>
        <begin position="79"/>
        <end position="95"/>
    </location>
</feature>
<feature type="strand" evidence="5">
    <location>
        <begin position="102"/>
        <end position="104"/>
    </location>
</feature>
<feature type="helix" evidence="5">
    <location>
        <begin position="115"/>
        <end position="125"/>
    </location>
</feature>
<feature type="helix" evidence="5">
    <location>
        <begin position="134"/>
        <end position="136"/>
    </location>
</feature>
<feature type="helix" evidence="5">
    <location>
        <begin position="140"/>
        <end position="144"/>
    </location>
</feature>
<feature type="helix" evidence="5">
    <location>
        <begin position="146"/>
        <end position="153"/>
    </location>
</feature>
<feature type="strand" evidence="5">
    <location>
        <begin position="159"/>
        <end position="162"/>
    </location>
</feature>
<feature type="helix" evidence="5">
    <location>
        <begin position="170"/>
        <end position="181"/>
    </location>
</feature>
<feature type="strand" evidence="5">
    <location>
        <begin position="182"/>
        <end position="185"/>
    </location>
</feature>
<name>RL18_HALMA</name>
<keyword id="KW-0002">3D-structure</keyword>
<keyword id="KW-0903">Direct protein sequencing</keyword>
<keyword id="KW-1185">Reference proteome</keyword>
<keyword id="KW-0687">Ribonucleoprotein</keyword>
<keyword id="KW-0689">Ribosomal protein</keyword>
<keyword id="KW-0694">RNA-binding</keyword>
<keyword id="KW-0699">rRNA-binding</keyword>
<protein>
    <recommendedName>
        <fullName evidence="4">Large ribosomal subunit protein uL18</fullName>
    </recommendedName>
    <alternativeName>
        <fullName>50S ribosomal protein L18</fullName>
    </alternativeName>
    <alternativeName>
        <fullName>Hl12</fullName>
    </alternativeName>
    <alternativeName>
        <fullName>Hmal18</fullName>
    </alternativeName>
</protein>
<sequence length="187" mass="20614">MATGPRYKVPMRRRREARTDYHQRLRLLKSGKPRLVARKSNKHVRAQLVTLGPNGDDTLASAHSSDLAEYGWEAPTGNMPSAYLTGLLAGLRAQEAGVEEAVLDIGLNSPTPGSKVFAIQEGAIDAGLDIPHNDDVLADWQRTRGAHIAEYDEQLEEPLYSGDFDAADLPEHFDELRETLLDGDIEL</sequence>
<accession>P14123</accession>
<accession>Q5V1U1</accession>
<reference key="1">
    <citation type="journal article" date="1991" name="Mol. Gen. Genet.">
        <title>Organization and nucleotide sequence of ten ribosomal protein genes from the region equivalent to the spectinomycin operon in the archaebacterium Halobacterium marismortui.</title>
        <authorList>
            <person name="Scholzen T."/>
            <person name="Arndt E."/>
        </authorList>
    </citation>
    <scope>NUCLEOTIDE SEQUENCE [GENOMIC DNA]</scope>
</reference>
<reference key="2">
    <citation type="journal article" date="2004" name="Genome Res.">
        <title>Genome sequence of Haloarcula marismortui: a halophilic archaeon from the Dead Sea.</title>
        <authorList>
            <person name="Baliga N.S."/>
            <person name="Bonneau R."/>
            <person name="Facciotti M.T."/>
            <person name="Pan M."/>
            <person name="Glusman G."/>
            <person name="Deutsch E.W."/>
            <person name="Shannon P."/>
            <person name="Chiu Y."/>
            <person name="Weng R.S."/>
            <person name="Gan R.R."/>
            <person name="Hung P."/>
            <person name="Date S.V."/>
            <person name="Marcotte E."/>
            <person name="Hood L."/>
            <person name="Ng W.V."/>
        </authorList>
    </citation>
    <scope>NUCLEOTIDE SEQUENCE [LARGE SCALE GENOMIC DNA]</scope>
    <source>
        <strain>ATCC 43049 / DSM 3752 / JCM 8966 / VKM B-1809</strain>
    </source>
</reference>
<reference key="3">
    <citation type="journal article" date="1988" name="Biochemistry">
        <title>Extended N-terminal sequencing of proteins of archaebacterial ribosomes blotted from two-dimensional gels onto glass fiber and poly(vinylidene difluoride) membrane.</title>
        <authorList>
            <person name="Walsh M.J."/>
            <person name="McDougall J."/>
            <person name="Wittmann-Liebold B."/>
        </authorList>
    </citation>
    <scope>PROTEIN SEQUENCE OF 2-25</scope>
</reference>
<reference key="4">
    <citation type="journal article" date="1993" name="J. Mol. Biol.">
        <title>Localization of proteins HL29 and HL31 from Haloarcula marismortui within the 50 S ribosomal subunit by chemical crosslinking.</title>
        <authorList>
            <person name="Bergmann U."/>
            <person name="Wittmann-Liebold B."/>
        </authorList>
    </citation>
    <scope>CROSS-LINKING TO L21E</scope>
</reference>
<reference key="5">
    <citation type="journal article" date="2000" name="Science">
        <title>The complete atomic structure of the large ribosomal subunit at 2.4 A resolution.</title>
        <authorList>
            <person name="Ban N."/>
            <person name="Nissen P."/>
            <person name="Hansen J."/>
            <person name="Moore P.B."/>
            <person name="Steitz T.A."/>
        </authorList>
    </citation>
    <scope>X-RAY CRYSTALLOGRAPHY (2.4 ANGSTROMS) OF THE 50S SUBUNIT</scope>
    <source>
        <strain>ATCC 43049 / DSM 3752 / JCM 8966 / VKM B-1809</strain>
    </source>
</reference>
<reference key="6">
    <citation type="journal article" date="2000" name="Science">
        <title>The structural basis of ribosome activity in peptide bond synthesis.</title>
        <authorList>
            <person name="Nissen P."/>
            <person name="Hansen J."/>
            <person name="Ban N."/>
            <person name="Moore P.B."/>
            <person name="Steitz T.A."/>
        </authorList>
    </citation>
    <scope>X-RAY CRYSTALLOGRAPHY (3.0 ANGSTROMS) OF THE 50S SUBUNIT</scope>
    <source>
        <strain>ATCC 43049 / DSM 3752 / JCM 8966 / VKM B-1809</strain>
    </source>
</reference>
<reference key="7">
    <citation type="journal article" date="2002" name="Nat. Struct. Biol.">
        <title>A pre-translocational intermediate in protein synthesis observed in crystals of enzymatically active 50S subunits.</title>
        <authorList>
            <person name="Schmeing T.M."/>
            <person name="Seila A.C."/>
            <person name="Hansen J.L."/>
            <person name="Freeborn B."/>
            <person name="Soukup J.K."/>
            <person name="Scaringe S.A."/>
            <person name="Strobel S.A."/>
            <person name="Moore P.B."/>
            <person name="Steitz T.A."/>
        </authorList>
    </citation>
    <scope>X-RAY CRYSTALLOGRAPHY (3.1 ANGSTROMS) OF THE 50S SUBUNIT</scope>
    <source>
        <strain>ATCC 43049 / DSM 3752 / JCM 8966 / VKM B-1809</strain>
    </source>
</reference>
<reference key="8">
    <citation type="journal article" date="2001" name="EMBO J.">
        <title>The kink-turn: a new RNA secondary structure motif.</title>
        <authorList>
            <person name="Klein D.J."/>
            <person name="Schmeing T.M."/>
            <person name="Moore P.B."/>
            <person name="Steitz T.A."/>
        </authorList>
    </citation>
    <scope>X-RAY CRYSTALLOGRAPHY (2.4 ANGSTROMS) OF THE 50S SUBUNIT</scope>
    <source>
        <strain>ATCC 43049 / DSM 3752 / JCM 8966 / VKM B-1809</strain>
    </source>
</reference>
<reference key="9">
    <citation type="journal article" date="2002" name="Mol. Cell">
        <title>The structures of four macrolide antibiotics bound to the large ribosomal subunit.</title>
        <authorList>
            <person name="Hansen J.L."/>
            <person name="Ippolito J.A."/>
            <person name="Ban N."/>
            <person name="Nissen P."/>
            <person name="Moore P.B."/>
            <person name="Steitz T.A."/>
        </authorList>
    </citation>
    <scope>X-RAY CRYSTALLOGRAPHY (3.0 ANGSTROMS) OF THE 50S SUBUNIT IN COMPLEX WITH FOUR MACROLIDE ANTIBIOTICS</scope>
    <source>
        <strain>ATCC 43049 / DSM 3752 / JCM 8966 / VKM B-1809</strain>
    </source>
</reference>
<reference key="10">
    <citation type="journal article" date="2002" name="Proc. Natl. Acad. Sci. U.S.A.">
        <title>Structural insights into peptide bond formation.</title>
        <authorList>
            <person name="Hansen J.L."/>
            <person name="Schmeing T.M."/>
            <person name="Moore P.B."/>
            <person name="Steitz T.A."/>
        </authorList>
    </citation>
    <scope>X-RAY CRYSTALLOGRAPHY (2.8 ANGSTROMS) OF THE 50S SUBUNIT</scope>
    <source>
        <strain>ATCC 43049 / DSM 3752 / JCM 8966 / VKM B-1809</strain>
    </source>
</reference>
<reference key="11">
    <citation type="journal article" date="2003" name="J. Mol. Biol.">
        <title>Structures of five antibiotics bound at the peptidyl transferase center of the large ribosomal subunit.</title>
        <authorList>
            <person name="Hansen J.L."/>
            <person name="Moore P.B."/>
            <person name="Steitz T.A."/>
        </authorList>
    </citation>
    <scope>X-RAY CRYSTALLOGRAPHY (3.0 ANGSTROMS) OF THE 50S SUBUNIT IN COMPLEX WITH FIVE ANTIBIOTICS AT THE PEPTIDYL TRANSFERASE CENTER</scope>
    <source>
        <strain>ATCC 43049 / DSM 3752 / JCM 8966 / VKM B-1809</strain>
    </source>
</reference>
<reference key="12">
    <citation type="journal article" date="2003" name="RNA">
        <title>Structures of deacylated tRNA mimics bound to the E site of the large ribosomal subunit.</title>
        <authorList>
            <person name="Schmeing T.M."/>
            <person name="Moore P.B."/>
            <person name="Steitz T.A."/>
        </authorList>
    </citation>
    <scope>X-RAY CRYSTALLOGRAPHY (2.9 ANGSTROMS) OF THE 50S SUBUNIT WITH TWO DIFFERENT E SITE SUBSTRATES</scope>
</reference>
<reference key="13">
    <citation type="journal article" date="2013" name="Acta Crystallogr. D">
        <title>Revisiting the Haloarcula marismortui 50S ribosomal subunit model.</title>
        <authorList>
            <person name="Gabdulkhakov A."/>
            <person name="Nikonov S."/>
            <person name="Garber M."/>
        </authorList>
    </citation>
    <scope>X-RAY CRYSTALLOGRAPHY (2.4 ANGSTROMS) OF THE 50S SUBUNIT</scope>
</reference>
<proteinExistence type="evidence at protein level"/>
<organism>
    <name type="scientific">Haloarcula marismortui (strain ATCC 43049 / DSM 3752 / JCM 8966 / VKM B-1809)</name>
    <name type="common">Halobacterium marismortui</name>
    <dbReference type="NCBI Taxonomy" id="272569"/>
    <lineage>
        <taxon>Archaea</taxon>
        <taxon>Methanobacteriati</taxon>
        <taxon>Methanobacteriota</taxon>
        <taxon>Stenosarchaea group</taxon>
        <taxon>Halobacteria</taxon>
        <taxon>Halobacteriales</taxon>
        <taxon>Haloarculaceae</taxon>
        <taxon>Haloarcula</taxon>
    </lineage>
</organism>
<dbReference type="EMBL" id="X58395">
    <property type="protein sequence ID" value="CAA41290.1"/>
    <property type="molecule type" value="Genomic_DNA"/>
</dbReference>
<dbReference type="EMBL" id="AY596297">
    <property type="protein sequence ID" value="AAV46511.1"/>
    <property type="molecule type" value="Genomic_DNA"/>
</dbReference>
<dbReference type="PIR" id="S16541">
    <property type="entry name" value="R5HS18"/>
</dbReference>
<dbReference type="RefSeq" id="WP_011223738.1">
    <property type="nucleotide sequence ID" value="NZ_CP039138.1"/>
</dbReference>
<dbReference type="PDB" id="1FFK">
    <property type="method" value="X-ray"/>
    <property type="resolution" value="2.40 A"/>
    <property type="chains" value="K=2-186"/>
</dbReference>
<dbReference type="PDB" id="1JJ2">
    <property type="method" value="X-ray"/>
    <property type="resolution" value="2.40 A"/>
    <property type="chains" value="M=2-187"/>
</dbReference>
<dbReference type="PDB" id="1K73">
    <property type="method" value="X-ray"/>
    <property type="resolution" value="3.01 A"/>
    <property type="chains" value="O=2-187"/>
</dbReference>
<dbReference type="PDB" id="1K8A">
    <property type="method" value="X-ray"/>
    <property type="resolution" value="3.00 A"/>
    <property type="chains" value="O=2-187"/>
</dbReference>
<dbReference type="PDB" id="1K9M">
    <property type="method" value="X-ray"/>
    <property type="resolution" value="3.00 A"/>
    <property type="chains" value="O=2-187"/>
</dbReference>
<dbReference type="PDB" id="1KC8">
    <property type="method" value="X-ray"/>
    <property type="resolution" value="3.01 A"/>
    <property type="chains" value="O=2-187"/>
</dbReference>
<dbReference type="PDB" id="1KD1">
    <property type="method" value="X-ray"/>
    <property type="resolution" value="3.00 A"/>
    <property type="chains" value="O=2-187"/>
</dbReference>
<dbReference type="PDB" id="1KQS">
    <property type="method" value="X-ray"/>
    <property type="resolution" value="3.10 A"/>
    <property type="chains" value="M=2-187"/>
</dbReference>
<dbReference type="PDB" id="1M1K">
    <property type="method" value="X-ray"/>
    <property type="resolution" value="3.20 A"/>
    <property type="chains" value="O=2-187"/>
</dbReference>
<dbReference type="PDB" id="1M90">
    <property type="method" value="X-ray"/>
    <property type="resolution" value="2.80 A"/>
    <property type="chains" value="O=2-187"/>
</dbReference>
<dbReference type="PDB" id="1ML5">
    <property type="method" value="EM"/>
    <property type="resolution" value="14.00 A"/>
    <property type="chains" value="q=2-187"/>
</dbReference>
<dbReference type="PDB" id="1N8R">
    <property type="method" value="X-ray"/>
    <property type="resolution" value="3.00 A"/>
    <property type="chains" value="O=2-187"/>
</dbReference>
<dbReference type="PDB" id="1NJI">
    <property type="method" value="X-ray"/>
    <property type="resolution" value="3.00 A"/>
    <property type="chains" value="O=2-187"/>
</dbReference>
<dbReference type="PDB" id="1Q7Y">
    <property type="method" value="X-ray"/>
    <property type="resolution" value="3.20 A"/>
    <property type="chains" value="O=2-187"/>
</dbReference>
<dbReference type="PDB" id="1Q81">
    <property type="method" value="X-ray"/>
    <property type="resolution" value="2.95 A"/>
    <property type="chains" value="O=2-187"/>
</dbReference>
<dbReference type="PDB" id="1Q82">
    <property type="method" value="X-ray"/>
    <property type="resolution" value="2.98 A"/>
    <property type="chains" value="O=2-187"/>
</dbReference>
<dbReference type="PDB" id="1Q86">
    <property type="method" value="X-ray"/>
    <property type="resolution" value="3.00 A"/>
    <property type="chains" value="O=2-187"/>
</dbReference>
<dbReference type="PDB" id="1QVF">
    <property type="method" value="X-ray"/>
    <property type="resolution" value="3.10 A"/>
    <property type="chains" value="M=2-187"/>
</dbReference>
<dbReference type="PDB" id="1QVG">
    <property type="method" value="X-ray"/>
    <property type="resolution" value="2.90 A"/>
    <property type="chains" value="M=2-187"/>
</dbReference>
<dbReference type="PDB" id="1S72">
    <property type="method" value="X-ray"/>
    <property type="resolution" value="2.40 A"/>
    <property type="chains" value="N=1-187"/>
</dbReference>
<dbReference type="PDB" id="1VQ4">
    <property type="method" value="X-ray"/>
    <property type="resolution" value="2.70 A"/>
    <property type="chains" value="N=1-187"/>
</dbReference>
<dbReference type="PDB" id="1VQ5">
    <property type="method" value="X-ray"/>
    <property type="resolution" value="2.60 A"/>
    <property type="chains" value="N=1-187"/>
</dbReference>
<dbReference type="PDB" id="1VQ6">
    <property type="method" value="X-ray"/>
    <property type="resolution" value="2.70 A"/>
    <property type="chains" value="N=1-187"/>
</dbReference>
<dbReference type="PDB" id="1VQ7">
    <property type="method" value="X-ray"/>
    <property type="resolution" value="2.50 A"/>
    <property type="chains" value="N=1-187"/>
</dbReference>
<dbReference type="PDB" id="1VQ8">
    <property type="method" value="X-ray"/>
    <property type="resolution" value="2.20 A"/>
    <property type="chains" value="N=1-187"/>
</dbReference>
<dbReference type="PDB" id="1VQ9">
    <property type="method" value="X-ray"/>
    <property type="resolution" value="2.40 A"/>
    <property type="chains" value="N=1-187"/>
</dbReference>
<dbReference type="PDB" id="1VQK">
    <property type="method" value="X-ray"/>
    <property type="resolution" value="2.30 A"/>
    <property type="chains" value="N=1-187"/>
</dbReference>
<dbReference type="PDB" id="1VQL">
    <property type="method" value="X-ray"/>
    <property type="resolution" value="2.30 A"/>
    <property type="chains" value="N=1-187"/>
</dbReference>
<dbReference type="PDB" id="1VQM">
    <property type="method" value="X-ray"/>
    <property type="resolution" value="2.30 A"/>
    <property type="chains" value="N=1-187"/>
</dbReference>
<dbReference type="PDB" id="1VQN">
    <property type="method" value="X-ray"/>
    <property type="resolution" value="2.40 A"/>
    <property type="chains" value="N=1-187"/>
</dbReference>
<dbReference type="PDB" id="1VQO">
    <property type="method" value="X-ray"/>
    <property type="resolution" value="2.20 A"/>
    <property type="chains" value="N=1-187"/>
</dbReference>
<dbReference type="PDB" id="1VQP">
    <property type="method" value="X-ray"/>
    <property type="resolution" value="2.25 A"/>
    <property type="chains" value="N=1-187"/>
</dbReference>
<dbReference type="PDB" id="1W2B">
    <property type="method" value="X-ray"/>
    <property type="resolution" value="3.50 A"/>
    <property type="chains" value="M=2-187"/>
</dbReference>
<dbReference type="PDB" id="1YHQ">
    <property type="method" value="X-ray"/>
    <property type="resolution" value="2.40 A"/>
    <property type="chains" value="N=1-187"/>
</dbReference>
<dbReference type="PDB" id="1YI2">
    <property type="method" value="X-ray"/>
    <property type="resolution" value="2.65 A"/>
    <property type="chains" value="N=1-187"/>
</dbReference>
<dbReference type="PDB" id="1YIJ">
    <property type="method" value="X-ray"/>
    <property type="resolution" value="2.60 A"/>
    <property type="chains" value="N=1-187"/>
</dbReference>
<dbReference type="PDB" id="1YIT">
    <property type="method" value="X-ray"/>
    <property type="resolution" value="2.80 A"/>
    <property type="chains" value="N=1-187"/>
</dbReference>
<dbReference type="PDB" id="1YJ9">
    <property type="method" value="X-ray"/>
    <property type="resolution" value="2.90 A"/>
    <property type="chains" value="N=1-187"/>
</dbReference>
<dbReference type="PDB" id="1YJN">
    <property type="method" value="X-ray"/>
    <property type="resolution" value="3.00 A"/>
    <property type="chains" value="N=1-187"/>
</dbReference>
<dbReference type="PDB" id="1YJW">
    <property type="method" value="X-ray"/>
    <property type="resolution" value="2.90 A"/>
    <property type="chains" value="N=1-187"/>
</dbReference>
<dbReference type="PDB" id="2OTJ">
    <property type="method" value="X-ray"/>
    <property type="resolution" value="2.90 A"/>
    <property type="chains" value="N=1-187"/>
</dbReference>
<dbReference type="PDB" id="2OTL">
    <property type="method" value="X-ray"/>
    <property type="resolution" value="2.70 A"/>
    <property type="chains" value="N=1-187"/>
</dbReference>
<dbReference type="PDB" id="2QA4">
    <property type="method" value="X-ray"/>
    <property type="resolution" value="3.00 A"/>
    <property type="chains" value="N=1-187"/>
</dbReference>
<dbReference type="PDB" id="2QEX">
    <property type="method" value="X-ray"/>
    <property type="resolution" value="2.90 A"/>
    <property type="chains" value="N=1-187"/>
</dbReference>
<dbReference type="PDB" id="3CC2">
    <property type="method" value="X-ray"/>
    <property type="resolution" value="2.40 A"/>
    <property type="chains" value="N=1-187"/>
</dbReference>
<dbReference type="PDB" id="3CC4">
    <property type="method" value="X-ray"/>
    <property type="resolution" value="2.70 A"/>
    <property type="chains" value="N=1-187"/>
</dbReference>
<dbReference type="PDB" id="3CC7">
    <property type="method" value="X-ray"/>
    <property type="resolution" value="2.70 A"/>
    <property type="chains" value="N=1-187"/>
</dbReference>
<dbReference type="PDB" id="3CCE">
    <property type="method" value="X-ray"/>
    <property type="resolution" value="2.75 A"/>
    <property type="chains" value="N=1-187"/>
</dbReference>
<dbReference type="PDB" id="3CCJ">
    <property type="method" value="X-ray"/>
    <property type="resolution" value="2.70 A"/>
    <property type="chains" value="N=1-187"/>
</dbReference>
<dbReference type="PDB" id="3CCL">
    <property type="method" value="X-ray"/>
    <property type="resolution" value="2.90 A"/>
    <property type="chains" value="N=1-187"/>
</dbReference>
<dbReference type="PDB" id="3CCM">
    <property type="method" value="X-ray"/>
    <property type="resolution" value="2.55 A"/>
    <property type="chains" value="N=1-187"/>
</dbReference>
<dbReference type="PDB" id="3CCQ">
    <property type="method" value="X-ray"/>
    <property type="resolution" value="2.90 A"/>
    <property type="chains" value="N=1-187"/>
</dbReference>
<dbReference type="PDB" id="3CCR">
    <property type="method" value="X-ray"/>
    <property type="resolution" value="3.00 A"/>
    <property type="chains" value="N=1-187"/>
</dbReference>
<dbReference type="PDB" id="3CCS">
    <property type="method" value="X-ray"/>
    <property type="resolution" value="2.95 A"/>
    <property type="chains" value="N=1-187"/>
</dbReference>
<dbReference type="PDB" id="3CCU">
    <property type="method" value="X-ray"/>
    <property type="resolution" value="2.80 A"/>
    <property type="chains" value="N=1-187"/>
</dbReference>
<dbReference type="PDB" id="3CCV">
    <property type="method" value="X-ray"/>
    <property type="resolution" value="2.90 A"/>
    <property type="chains" value="N=1-187"/>
</dbReference>
<dbReference type="PDB" id="3CD6">
    <property type="method" value="X-ray"/>
    <property type="resolution" value="2.75 A"/>
    <property type="chains" value="N=1-187"/>
</dbReference>
<dbReference type="PDB" id="3CMA">
    <property type="method" value="X-ray"/>
    <property type="resolution" value="2.80 A"/>
    <property type="chains" value="N=1-187"/>
</dbReference>
<dbReference type="PDB" id="3CME">
    <property type="method" value="X-ray"/>
    <property type="resolution" value="2.95 A"/>
    <property type="chains" value="N=1-187"/>
</dbReference>
<dbReference type="PDB" id="3CPW">
    <property type="method" value="X-ray"/>
    <property type="resolution" value="2.70 A"/>
    <property type="chains" value="M=1-187"/>
</dbReference>
<dbReference type="PDB" id="3CXC">
    <property type="method" value="X-ray"/>
    <property type="resolution" value="3.00 A"/>
    <property type="chains" value="M=2-187"/>
</dbReference>
<dbReference type="PDB" id="3G4S">
    <property type="method" value="X-ray"/>
    <property type="resolution" value="3.20 A"/>
    <property type="chains" value="N=2-187"/>
</dbReference>
<dbReference type="PDB" id="3G6E">
    <property type="method" value="X-ray"/>
    <property type="resolution" value="2.70 A"/>
    <property type="chains" value="N=2-187"/>
</dbReference>
<dbReference type="PDB" id="3G71">
    <property type="method" value="X-ray"/>
    <property type="resolution" value="2.85 A"/>
    <property type="chains" value="N=2-187"/>
</dbReference>
<dbReference type="PDB" id="3I55">
    <property type="method" value="X-ray"/>
    <property type="resolution" value="3.11 A"/>
    <property type="chains" value="N=1-187"/>
</dbReference>
<dbReference type="PDB" id="3I56">
    <property type="method" value="X-ray"/>
    <property type="resolution" value="2.90 A"/>
    <property type="chains" value="N=1-187"/>
</dbReference>
<dbReference type="PDB" id="3OW2">
    <property type="method" value="X-ray"/>
    <property type="resolution" value="2.70 A"/>
    <property type="chains" value="M=2-187"/>
</dbReference>
<dbReference type="PDB" id="4ADX">
    <property type="method" value="EM"/>
    <property type="resolution" value="6.60 A"/>
    <property type="chains" value="N=1-187"/>
</dbReference>
<dbReference type="PDB" id="4V42">
    <property type="method" value="X-ray"/>
    <property type="resolution" value="5.50 A"/>
    <property type="chains" value="BQ=2-187"/>
</dbReference>
<dbReference type="PDB" id="4V4R">
    <property type="method" value="X-ray"/>
    <property type="resolution" value="5.90 A"/>
    <property type="chains" value="S=2-187"/>
</dbReference>
<dbReference type="PDB" id="4V4S">
    <property type="method" value="X-ray"/>
    <property type="resolution" value="6.76 A"/>
    <property type="chains" value="S=2-187"/>
</dbReference>
<dbReference type="PDB" id="4V4T">
    <property type="method" value="X-ray"/>
    <property type="resolution" value="6.46 A"/>
    <property type="chains" value="S=2-187"/>
</dbReference>
<dbReference type="PDB" id="4V9F">
    <property type="method" value="X-ray"/>
    <property type="resolution" value="2.40 A"/>
    <property type="chains" value="N=1-187"/>
</dbReference>
<dbReference type="PDBsum" id="1FFK"/>
<dbReference type="PDBsum" id="1JJ2"/>
<dbReference type="PDBsum" id="1K73"/>
<dbReference type="PDBsum" id="1K8A"/>
<dbReference type="PDBsum" id="1K9M"/>
<dbReference type="PDBsum" id="1KC8"/>
<dbReference type="PDBsum" id="1KD1"/>
<dbReference type="PDBsum" id="1KQS"/>
<dbReference type="PDBsum" id="1M1K"/>
<dbReference type="PDBsum" id="1M90"/>
<dbReference type="PDBsum" id="1ML5"/>
<dbReference type="PDBsum" id="1N8R"/>
<dbReference type="PDBsum" id="1NJI"/>
<dbReference type="PDBsum" id="1Q7Y"/>
<dbReference type="PDBsum" id="1Q81"/>
<dbReference type="PDBsum" id="1Q82"/>
<dbReference type="PDBsum" id="1Q86"/>
<dbReference type="PDBsum" id="1QVF"/>
<dbReference type="PDBsum" id="1QVG"/>
<dbReference type="PDBsum" id="1S72"/>
<dbReference type="PDBsum" id="1VQ4"/>
<dbReference type="PDBsum" id="1VQ5"/>
<dbReference type="PDBsum" id="1VQ6"/>
<dbReference type="PDBsum" id="1VQ7"/>
<dbReference type="PDBsum" id="1VQ8"/>
<dbReference type="PDBsum" id="1VQ9"/>
<dbReference type="PDBsum" id="1VQK"/>
<dbReference type="PDBsum" id="1VQL"/>
<dbReference type="PDBsum" id="1VQM"/>
<dbReference type="PDBsum" id="1VQN"/>
<dbReference type="PDBsum" id="1VQO"/>
<dbReference type="PDBsum" id="1VQP"/>
<dbReference type="PDBsum" id="1W2B"/>
<dbReference type="PDBsum" id="1YHQ"/>
<dbReference type="PDBsum" id="1YI2"/>
<dbReference type="PDBsum" id="1YIJ"/>
<dbReference type="PDBsum" id="1YIT"/>
<dbReference type="PDBsum" id="1YJ9"/>
<dbReference type="PDBsum" id="1YJN"/>
<dbReference type="PDBsum" id="1YJW"/>
<dbReference type="PDBsum" id="2OTJ"/>
<dbReference type="PDBsum" id="2OTL"/>
<dbReference type="PDBsum" id="2QA4"/>
<dbReference type="PDBsum" id="2QEX"/>
<dbReference type="PDBsum" id="3CC2"/>
<dbReference type="PDBsum" id="3CC4"/>
<dbReference type="PDBsum" id="3CC7"/>
<dbReference type="PDBsum" id="3CCE"/>
<dbReference type="PDBsum" id="3CCJ"/>
<dbReference type="PDBsum" id="3CCL"/>
<dbReference type="PDBsum" id="3CCM"/>
<dbReference type="PDBsum" id="3CCQ"/>
<dbReference type="PDBsum" id="3CCR"/>
<dbReference type="PDBsum" id="3CCS"/>
<dbReference type="PDBsum" id="3CCU"/>
<dbReference type="PDBsum" id="3CCV"/>
<dbReference type="PDBsum" id="3CD6"/>
<dbReference type="PDBsum" id="3CMA"/>
<dbReference type="PDBsum" id="3CME"/>
<dbReference type="PDBsum" id="3CPW"/>
<dbReference type="PDBsum" id="3CXC"/>
<dbReference type="PDBsum" id="3G4S"/>
<dbReference type="PDBsum" id="3G6E"/>
<dbReference type="PDBsum" id="3G71"/>
<dbReference type="PDBsum" id="3I55"/>
<dbReference type="PDBsum" id="3I56"/>
<dbReference type="PDBsum" id="3OW2"/>
<dbReference type="PDBsum" id="4ADX"/>
<dbReference type="PDBsum" id="4V42"/>
<dbReference type="PDBsum" id="4V4R"/>
<dbReference type="PDBsum" id="4V4S"/>
<dbReference type="PDBsum" id="4V4T"/>
<dbReference type="PDBsum" id="4V9F"/>
<dbReference type="SMR" id="P14123"/>
<dbReference type="IntAct" id="P14123">
    <property type="interactions" value="3"/>
</dbReference>
<dbReference type="STRING" id="272569.rrnAC1593"/>
<dbReference type="PaxDb" id="272569-rrnAC1593"/>
<dbReference type="EnsemblBacteria" id="AAV46511">
    <property type="protein sequence ID" value="AAV46511"/>
    <property type="gene ID" value="rrnAC1593"/>
</dbReference>
<dbReference type="KEGG" id="hma:rrnAC1593"/>
<dbReference type="PATRIC" id="fig|272569.17.peg.2282"/>
<dbReference type="eggNOG" id="arCOG04088">
    <property type="taxonomic scope" value="Archaea"/>
</dbReference>
<dbReference type="HOGENOM" id="CLU_056222_2_0_2"/>
<dbReference type="EvolutionaryTrace" id="P14123"/>
<dbReference type="Proteomes" id="UP000001169">
    <property type="component" value="Chromosome I"/>
</dbReference>
<dbReference type="GO" id="GO:0022625">
    <property type="term" value="C:cytosolic large ribosomal subunit"/>
    <property type="evidence" value="ECO:0007669"/>
    <property type="project" value="TreeGrafter"/>
</dbReference>
<dbReference type="GO" id="GO:0008097">
    <property type="term" value="F:5S rRNA binding"/>
    <property type="evidence" value="ECO:0007669"/>
    <property type="project" value="InterPro"/>
</dbReference>
<dbReference type="GO" id="GO:0003735">
    <property type="term" value="F:structural constituent of ribosome"/>
    <property type="evidence" value="ECO:0007669"/>
    <property type="project" value="InterPro"/>
</dbReference>
<dbReference type="GO" id="GO:0000027">
    <property type="term" value="P:ribosomal large subunit assembly"/>
    <property type="evidence" value="ECO:0007669"/>
    <property type="project" value="TreeGrafter"/>
</dbReference>
<dbReference type="GO" id="GO:0006412">
    <property type="term" value="P:translation"/>
    <property type="evidence" value="ECO:0007669"/>
    <property type="project" value="UniProtKB-UniRule"/>
</dbReference>
<dbReference type="CDD" id="cd00432">
    <property type="entry name" value="Ribosomal_L18_L5e"/>
    <property type="match status" value="1"/>
</dbReference>
<dbReference type="FunFam" id="3.30.420.100:FF:000008">
    <property type="entry name" value="50S ribosomal protein L18"/>
    <property type="match status" value="1"/>
</dbReference>
<dbReference type="Gene3D" id="3.30.420.100">
    <property type="match status" value="1"/>
</dbReference>
<dbReference type="HAMAP" id="MF_01337_A">
    <property type="entry name" value="Ribosomal_uL18_A"/>
    <property type="match status" value="1"/>
</dbReference>
<dbReference type="InterPro" id="IPR005485">
    <property type="entry name" value="Rbsml_uL18_euk"/>
</dbReference>
<dbReference type="NCBIfam" id="NF006342">
    <property type="entry name" value="PRK08569.1"/>
    <property type="match status" value="1"/>
</dbReference>
<dbReference type="PANTHER" id="PTHR23410:SF12">
    <property type="entry name" value="LARGE RIBOSOMAL SUBUNIT PROTEIN UL18"/>
    <property type="match status" value="1"/>
</dbReference>
<dbReference type="PANTHER" id="PTHR23410">
    <property type="entry name" value="RIBOSOMAL PROTEIN L5-RELATED"/>
    <property type="match status" value="1"/>
</dbReference>
<dbReference type="Pfam" id="PF17144">
    <property type="entry name" value="Ribosomal_L5e"/>
    <property type="match status" value="2"/>
</dbReference>
<dbReference type="PRINTS" id="PR00058">
    <property type="entry name" value="RIBOSOMALL5"/>
</dbReference>
<dbReference type="SUPFAM" id="SSF53137">
    <property type="entry name" value="Translational machinery components"/>
    <property type="match status" value="1"/>
</dbReference>